<feature type="chain" id="PRO_0000382076" description="ATP synthase subunit delta">
    <location>
        <begin position="1"/>
        <end position="173"/>
    </location>
</feature>
<sequence length="173" mass="20396">MENIIARRYAKAIASRADINDFYQNLCILNSAFVLPKFKNIIESNEIKKERKMEFLDSFFDIKNSSFQNFLRLLIENSRLECIPQIVKELERQKAFKENIFVGIVYSKEKLSQENLKDLEVKLNKKFDANIKLNNKISQDDSVKIELEELGYELSFSMKALQNKLNEYILKII</sequence>
<organism>
    <name type="scientific">Campylobacter jejuni subsp. jejuni serotype O:23/36 (strain 81-176)</name>
    <dbReference type="NCBI Taxonomy" id="354242"/>
    <lineage>
        <taxon>Bacteria</taxon>
        <taxon>Pseudomonadati</taxon>
        <taxon>Campylobacterota</taxon>
        <taxon>Epsilonproteobacteria</taxon>
        <taxon>Campylobacterales</taxon>
        <taxon>Campylobacteraceae</taxon>
        <taxon>Campylobacter</taxon>
    </lineage>
</organism>
<dbReference type="EMBL" id="CP000538">
    <property type="protein sequence ID" value="EAQ71908.1"/>
    <property type="molecule type" value="Genomic_DNA"/>
</dbReference>
<dbReference type="RefSeq" id="WP_002851861.1">
    <property type="nucleotide sequence ID" value="NC_008787.1"/>
</dbReference>
<dbReference type="SMR" id="A1VXI7"/>
<dbReference type="KEGG" id="cjj:CJJ81176_0139"/>
<dbReference type="eggNOG" id="COG0712">
    <property type="taxonomic scope" value="Bacteria"/>
</dbReference>
<dbReference type="HOGENOM" id="CLU_085114_3_1_7"/>
<dbReference type="Proteomes" id="UP000000646">
    <property type="component" value="Chromosome"/>
</dbReference>
<dbReference type="GO" id="GO:0005886">
    <property type="term" value="C:plasma membrane"/>
    <property type="evidence" value="ECO:0007669"/>
    <property type="project" value="UniProtKB-SubCell"/>
</dbReference>
<dbReference type="GO" id="GO:0045259">
    <property type="term" value="C:proton-transporting ATP synthase complex"/>
    <property type="evidence" value="ECO:0007669"/>
    <property type="project" value="UniProtKB-KW"/>
</dbReference>
<dbReference type="GO" id="GO:0046933">
    <property type="term" value="F:proton-transporting ATP synthase activity, rotational mechanism"/>
    <property type="evidence" value="ECO:0007669"/>
    <property type="project" value="UniProtKB-UniRule"/>
</dbReference>
<dbReference type="Gene3D" id="1.10.520.20">
    <property type="entry name" value="N-terminal domain of the delta subunit of the F1F0-ATP synthase"/>
    <property type="match status" value="1"/>
</dbReference>
<dbReference type="HAMAP" id="MF_01416">
    <property type="entry name" value="ATP_synth_delta_bact"/>
    <property type="match status" value="1"/>
</dbReference>
<dbReference type="InterPro" id="IPR026015">
    <property type="entry name" value="ATP_synth_OSCP/delta_N_sf"/>
</dbReference>
<dbReference type="InterPro" id="IPR000711">
    <property type="entry name" value="ATPase_OSCP/dsu"/>
</dbReference>
<dbReference type="NCBIfam" id="TIGR01145">
    <property type="entry name" value="ATP_synt_delta"/>
    <property type="match status" value="1"/>
</dbReference>
<dbReference type="NCBIfam" id="NF006291">
    <property type="entry name" value="PRK08474.1"/>
    <property type="match status" value="1"/>
</dbReference>
<dbReference type="PANTHER" id="PTHR11910">
    <property type="entry name" value="ATP SYNTHASE DELTA CHAIN"/>
    <property type="match status" value="1"/>
</dbReference>
<dbReference type="Pfam" id="PF00213">
    <property type="entry name" value="OSCP"/>
    <property type="match status" value="1"/>
</dbReference>
<dbReference type="PRINTS" id="PR00125">
    <property type="entry name" value="ATPASEDELTA"/>
</dbReference>
<dbReference type="SUPFAM" id="SSF47928">
    <property type="entry name" value="N-terminal domain of the delta subunit of the F1F0-ATP synthase"/>
    <property type="match status" value="1"/>
</dbReference>
<proteinExistence type="inferred from homology"/>
<protein>
    <recommendedName>
        <fullName evidence="1">ATP synthase subunit delta</fullName>
    </recommendedName>
    <alternativeName>
        <fullName evidence="1">ATP synthase F(1) sector subunit delta</fullName>
    </alternativeName>
    <alternativeName>
        <fullName evidence="1">F-type ATPase subunit delta</fullName>
        <shortName evidence="1">F-ATPase subunit delta</shortName>
    </alternativeName>
</protein>
<name>ATPD_CAMJJ</name>
<keyword id="KW-0066">ATP synthesis</keyword>
<keyword id="KW-0997">Cell inner membrane</keyword>
<keyword id="KW-1003">Cell membrane</keyword>
<keyword id="KW-0139">CF(1)</keyword>
<keyword id="KW-0375">Hydrogen ion transport</keyword>
<keyword id="KW-0406">Ion transport</keyword>
<keyword id="KW-0472">Membrane</keyword>
<keyword id="KW-0813">Transport</keyword>
<evidence type="ECO:0000255" key="1">
    <source>
        <dbReference type="HAMAP-Rule" id="MF_01416"/>
    </source>
</evidence>
<comment type="function">
    <text evidence="1">F(1)F(0) ATP synthase produces ATP from ADP in the presence of a proton or sodium gradient. F-type ATPases consist of two structural domains, F(1) containing the extramembraneous catalytic core and F(0) containing the membrane proton channel, linked together by a central stalk and a peripheral stalk. During catalysis, ATP synthesis in the catalytic domain of F(1) is coupled via a rotary mechanism of the central stalk subunits to proton translocation.</text>
</comment>
<comment type="function">
    <text evidence="1">This protein is part of the stalk that links CF(0) to CF(1). It either transmits conformational changes from CF(0) to CF(1) or is implicated in proton conduction.</text>
</comment>
<comment type="subunit">
    <text evidence="1">F-type ATPases have 2 components, F(1) - the catalytic core - and F(0) - the membrane proton channel. F(1) has five subunits: alpha(3), beta(3), gamma(1), delta(1), epsilon(1). F(0) has three main subunits: a(1), b(2) and c(10-14). The alpha and beta chains form an alternating ring which encloses part of the gamma chain. F(1) is attached to F(0) by a central stalk formed by the gamma and epsilon chains, while a peripheral stalk is formed by the delta and b chains.</text>
</comment>
<comment type="subcellular location">
    <subcellularLocation>
        <location evidence="1">Cell inner membrane</location>
        <topology evidence="1">Peripheral membrane protein</topology>
    </subcellularLocation>
</comment>
<comment type="similarity">
    <text evidence="1">Belongs to the ATPase delta chain family.</text>
</comment>
<gene>
    <name evidence="1" type="primary">atpH</name>
    <name type="ordered locus">CJJ81176_0139</name>
</gene>
<reference key="1">
    <citation type="submission" date="2006-12" db="EMBL/GenBank/DDBJ databases">
        <authorList>
            <person name="Fouts D.E."/>
            <person name="Nelson K.E."/>
            <person name="Sebastian Y."/>
        </authorList>
    </citation>
    <scope>NUCLEOTIDE SEQUENCE [LARGE SCALE GENOMIC DNA]</scope>
    <source>
        <strain>81-176</strain>
    </source>
</reference>
<accession>A1VXI7</accession>